<organism>
    <name type="scientific">Escherichia coli (strain K12)</name>
    <dbReference type="NCBI Taxonomy" id="83333"/>
    <lineage>
        <taxon>Bacteria</taxon>
        <taxon>Pseudomonadati</taxon>
        <taxon>Pseudomonadota</taxon>
        <taxon>Gammaproteobacteria</taxon>
        <taxon>Enterobacterales</taxon>
        <taxon>Enterobacteriaceae</taxon>
        <taxon>Escherichia</taxon>
    </lineage>
</organism>
<comment type="function">
    <text evidence="2">Affects biofilm formation and mucoidy.</text>
</comment>
<comment type="subcellular location">
    <subcellularLocation>
        <location evidence="3">Periplasm</location>
    </subcellularLocation>
</comment>
<comment type="induction">
    <text>Repressed by McbR.</text>
</comment>
<comment type="similarity">
    <text evidence="3">Belongs to the BhsA/McbA family.</text>
</comment>
<accession>P0AAX6</accession>
<accession>P75781</accession>
<proteinExistence type="evidence at transcript level"/>
<evidence type="ECO:0000255" key="1"/>
<evidence type="ECO:0000269" key="2">
    <source>
    </source>
</evidence>
<evidence type="ECO:0000305" key="3"/>
<feature type="signal peptide" evidence="1">
    <location>
        <begin position="1"/>
        <end position="22"/>
    </location>
</feature>
<feature type="chain" id="PRO_0000168725" description="Uncharacterized protein McbA">
    <location>
        <begin position="23"/>
        <end position="86"/>
    </location>
</feature>
<sequence>MKKCLTLLIATVLSGISLTAYAAQPMSNLDSGQLRPAGTVSATGASNLSDLEDKLAEKAREQGAKGYVINSAGGNDQMFGTATIYK</sequence>
<keyword id="KW-0574">Periplasm</keyword>
<keyword id="KW-1185">Reference proteome</keyword>
<keyword id="KW-0732">Signal</keyword>
<dbReference type="EMBL" id="U00096">
    <property type="protein sequence ID" value="AAC73893.2"/>
    <property type="molecule type" value="Genomic_DNA"/>
</dbReference>
<dbReference type="EMBL" id="AP009048">
    <property type="protein sequence ID" value="BAA35472.2"/>
    <property type="molecule type" value="Genomic_DNA"/>
</dbReference>
<dbReference type="PIR" id="F64817">
    <property type="entry name" value="F64817"/>
</dbReference>
<dbReference type="RefSeq" id="NP_415327.2">
    <property type="nucleotide sequence ID" value="NC_000913.3"/>
</dbReference>
<dbReference type="RefSeq" id="WP_000710619.1">
    <property type="nucleotide sequence ID" value="NZ_STEB01000019.1"/>
</dbReference>
<dbReference type="BioGRID" id="4263330">
    <property type="interactions" value="7"/>
</dbReference>
<dbReference type="FunCoup" id="P0AAX6">
    <property type="interactions" value="3"/>
</dbReference>
<dbReference type="STRING" id="511145.b0806"/>
<dbReference type="PaxDb" id="511145-b0806"/>
<dbReference type="EnsemblBacteria" id="AAC73893">
    <property type="protein sequence ID" value="AAC73893"/>
    <property type="gene ID" value="b0806"/>
</dbReference>
<dbReference type="GeneID" id="93776622"/>
<dbReference type="GeneID" id="947523"/>
<dbReference type="KEGG" id="ecj:JW5106"/>
<dbReference type="KEGG" id="eco:b0806"/>
<dbReference type="KEGG" id="ecoc:C3026_05080"/>
<dbReference type="PATRIC" id="fig|1411691.4.peg.1472"/>
<dbReference type="EchoBASE" id="EB3102"/>
<dbReference type="eggNOG" id="ENOG503333J">
    <property type="taxonomic scope" value="Bacteria"/>
</dbReference>
<dbReference type="HOGENOM" id="CLU_158602_2_1_6"/>
<dbReference type="InParanoid" id="P0AAX6"/>
<dbReference type="OMA" id="IAWRVNA"/>
<dbReference type="OrthoDB" id="6583245at2"/>
<dbReference type="PhylomeDB" id="P0AAX6"/>
<dbReference type="BioCyc" id="EcoCyc:G6415-MONOMER"/>
<dbReference type="PRO" id="PR:P0AAX6"/>
<dbReference type="Proteomes" id="UP000000625">
    <property type="component" value="Chromosome"/>
</dbReference>
<dbReference type="GO" id="GO:0042597">
    <property type="term" value="C:periplasmic space"/>
    <property type="evidence" value="ECO:0007669"/>
    <property type="project" value="UniProtKB-SubCell"/>
</dbReference>
<dbReference type="GO" id="GO:0009242">
    <property type="term" value="P:colanic acid biosynthetic process"/>
    <property type="evidence" value="ECO:0000315"/>
    <property type="project" value="EcoCyc"/>
</dbReference>
<dbReference type="GO" id="GO:0006950">
    <property type="term" value="P:response to stress"/>
    <property type="evidence" value="ECO:0000318"/>
    <property type="project" value="GO_Central"/>
</dbReference>
<dbReference type="FunFam" id="3.30.1660.10:FF:000001">
    <property type="entry name" value="Multiple stress resistance protein BhsA"/>
    <property type="match status" value="1"/>
</dbReference>
<dbReference type="Gene3D" id="3.30.1660.10">
    <property type="entry name" value="Flavin-binding protein dodecin"/>
    <property type="match status" value="1"/>
</dbReference>
<dbReference type="InterPro" id="IPR051096">
    <property type="entry name" value="BhsA/McbA_stress_biofilm_assoc"/>
</dbReference>
<dbReference type="InterPro" id="IPR025543">
    <property type="entry name" value="Dodecin-like"/>
</dbReference>
<dbReference type="InterPro" id="IPR036275">
    <property type="entry name" value="YdgH-like_sf"/>
</dbReference>
<dbReference type="InterPro" id="IPR010854">
    <property type="entry name" value="YdgH/BhsA/McbA-like_dom"/>
</dbReference>
<dbReference type="NCBIfam" id="NF040473">
    <property type="entry name" value="peri_YbiM_McbA"/>
    <property type="match status" value="1"/>
</dbReference>
<dbReference type="NCBIfam" id="NF047859">
    <property type="entry name" value="StressCuResBhsA"/>
    <property type="match status" value="1"/>
</dbReference>
<dbReference type="PANTHER" id="PTHR34156">
    <property type="entry name" value="OUTER MEMBRANE PROTEIN-RELATED-RELATED"/>
    <property type="match status" value="1"/>
</dbReference>
<dbReference type="PANTHER" id="PTHR34156:SF1">
    <property type="entry name" value="PERIPLASMIC PROTEIN"/>
    <property type="match status" value="1"/>
</dbReference>
<dbReference type="Pfam" id="PF07338">
    <property type="entry name" value="YdgH_BhsA-like"/>
    <property type="match status" value="1"/>
</dbReference>
<dbReference type="SUPFAM" id="SSF159871">
    <property type="entry name" value="YdgH-like"/>
    <property type="match status" value="1"/>
</dbReference>
<reference key="1">
    <citation type="journal article" date="1996" name="DNA Res.">
        <title>A 718-kb DNA sequence of the Escherichia coli K-12 genome corresponding to the 12.7-28.0 min region on the linkage map.</title>
        <authorList>
            <person name="Oshima T."/>
            <person name="Aiba H."/>
            <person name="Baba T."/>
            <person name="Fujita K."/>
            <person name="Hayashi K."/>
            <person name="Honjo A."/>
            <person name="Ikemoto K."/>
            <person name="Inada T."/>
            <person name="Itoh T."/>
            <person name="Kajihara M."/>
            <person name="Kanai K."/>
            <person name="Kashimoto K."/>
            <person name="Kimura S."/>
            <person name="Kitagawa M."/>
            <person name="Makino K."/>
            <person name="Masuda S."/>
            <person name="Miki T."/>
            <person name="Mizobuchi K."/>
            <person name="Mori H."/>
            <person name="Motomura K."/>
            <person name="Nakamura Y."/>
            <person name="Nashimoto H."/>
            <person name="Nishio Y."/>
            <person name="Saito N."/>
            <person name="Sampei G."/>
            <person name="Seki Y."/>
            <person name="Tagami H."/>
            <person name="Takemoto K."/>
            <person name="Wada C."/>
            <person name="Yamamoto Y."/>
            <person name="Yano M."/>
            <person name="Horiuchi T."/>
        </authorList>
    </citation>
    <scope>NUCLEOTIDE SEQUENCE [LARGE SCALE GENOMIC DNA]</scope>
    <source>
        <strain>K12 / W3110 / ATCC 27325 / DSM 5911</strain>
    </source>
</reference>
<reference key="2">
    <citation type="journal article" date="1997" name="Science">
        <title>The complete genome sequence of Escherichia coli K-12.</title>
        <authorList>
            <person name="Blattner F.R."/>
            <person name="Plunkett G. III"/>
            <person name="Bloch C.A."/>
            <person name="Perna N.T."/>
            <person name="Burland V."/>
            <person name="Riley M."/>
            <person name="Collado-Vides J."/>
            <person name="Glasner J.D."/>
            <person name="Rode C.K."/>
            <person name="Mayhew G.F."/>
            <person name="Gregor J."/>
            <person name="Davis N.W."/>
            <person name="Kirkpatrick H.A."/>
            <person name="Goeden M.A."/>
            <person name="Rose D.J."/>
            <person name="Mau B."/>
            <person name="Shao Y."/>
        </authorList>
    </citation>
    <scope>NUCLEOTIDE SEQUENCE [LARGE SCALE GENOMIC DNA]</scope>
    <source>
        <strain>K12 / MG1655 / ATCC 47076</strain>
    </source>
</reference>
<reference key="3">
    <citation type="journal article" date="2006" name="Mol. Syst. Biol.">
        <title>Highly accurate genome sequences of Escherichia coli K-12 strains MG1655 and W3110.</title>
        <authorList>
            <person name="Hayashi K."/>
            <person name="Morooka N."/>
            <person name="Yamamoto Y."/>
            <person name="Fujita K."/>
            <person name="Isono K."/>
            <person name="Choi S."/>
            <person name="Ohtsubo E."/>
            <person name="Baba T."/>
            <person name="Wanner B.L."/>
            <person name="Mori H."/>
            <person name="Horiuchi T."/>
        </authorList>
    </citation>
    <scope>NUCLEOTIDE SEQUENCE [LARGE SCALE GENOMIC DNA]</scope>
    <source>
        <strain>K12 / W3110 / ATCC 27325 / DSM 5911</strain>
    </source>
</reference>
<reference key="4">
    <citation type="journal article" date="2008" name="ISME J.">
        <title>Escherichia coli transcription factor YncC (McbR) regulates colanic acid and biofilm formation by repressing expression of periplasmic protein YbiM (McbA).</title>
        <authorList>
            <person name="Zhang X.-S."/>
            <person name="Garcia-Contreras R."/>
            <person name="Wood T.K."/>
        </authorList>
    </citation>
    <scope>FUNCTION</scope>
    <scope>REGULATION BY MCBR</scope>
    <source>
        <strain>K12</strain>
    </source>
</reference>
<name>MCBA_ECOLI</name>
<protein>
    <recommendedName>
        <fullName>Uncharacterized protein McbA</fullName>
    </recommendedName>
    <alternativeName>
        <fullName>MqsR-controlled colanic acid and biofilm protein A</fullName>
    </alternativeName>
</protein>
<gene>
    <name type="primary">mcbA</name>
    <name type="synonym">ybiM</name>
    <name type="ordered locus">b0806</name>
    <name type="ordered locus">JW5106</name>
</gene>